<proteinExistence type="inferred from homology"/>
<protein>
    <recommendedName>
        <fullName evidence="1">Aspartyl/glutamyl-tRNA(Asn/Gln) amidotransferase subunit B</fullName>
        <shortName evidence="1">Asp/Glu-ADT subunit B</shortName>
        <ecNumber evidence="1">6.3.5.-</ecNumber>
    </recommendedName>
</protein>
<evidence type="ECO:0000255" key="1">
    <source>
        <dbReference type="HAMAP-Rule" id="MF_00121"/>
    </source>
</evidence>
<dbReference type="EC" id="6.3.5.-" evidence="1"/>
<dbReference type="EMBL" id="CP000767">
    <property type="protein sequence ID" value="EAT99933.1"/>
    <property type="molecule type" value="Genomic_DNA"/>
</dbReference>
<dbReference type="RefSeq" id="WP_011992356.1">
    <property type="nucleotide sequence ID" value="NC_009715.2"/>
</dbReference>
<dbReference type="SMR" id="A7GYS1"/>
<dbReference type="STRING" id="360105.CCV52592_0791"/>
<dbReference type="KEGG" id="ccv:CCV52592_0791"/>
<dbReference type="HOGENOM" id="CLU_019240_0_0_7"/>
<dbReference type="OrthoDB" id="9804078at2"/>
<dbReference type="Proteomes" id="UP000006380">
    <property type="component" value="Chromosome"/>
</dbReference>
<dbReference type="GO" id="GO:0050566">
    <property type="term" value="F:asparaginyl-tRNA synthase (glutamine-hydrolyzing) activity"/>
    <property type="evidence" value="ECO:0007669"/>
    <property type="project" value="RHEA"/>
</dbReference>
<dbReference type="GO" id="GO:0005524">
    <property type="term" value="F:ATP binding"/>
    <property type="evidence" value="ECO:0007669"/>
    <property type="project" value="UniProtKB-KW"/>
</dbReference>
<dbReference type="GO" id="GO:0050567">
    <property type="term" value="F:glutaminyl-tRNA synthase (glutamine-hydrolyzing) activity"/>
    <property type="evidence" value="ECO:0007669"/>
    <property type="project" value="UniProtKB-UniRule"/>
</dbReference>
<dbReference type="GO" id="GO:0070681">
    <property type="term" value="P:glutaminyl-tRNAGln biosynthesis via transamidation"/>
    <property type="evidence" value="ECO:0007669"/>
    <property type="project" value="TreeGrafter"/>
</dbReference>
<dbReference type="GO" id="GO:0006412">
    <property type="term" value="P:translation"/>
    <property type="evidence" value="ECO:0007669"/>
    <property type="project" value="UniProtKB-UniRule"/>
</dbReference>
<dbReference type="FunFam" id="1.10.10.410:FF:000001">
    <property type="entry name" value="Aspartyl/glutamyl-tRNA(Asn/Gln) amidotransferase subunit B"/>
    <property type="match status" value="1"/>
</dbReference>
<dbReference type="Gene3D" id="1.10.10.410">
    <property type="match status" value="1"/>
</dbReference>
<dbReference type="Gene3D" id="1.10.150.380">
    <property type="entry name" value="GatB domain, N-terminal subdomain"/>
    <property type="match status" value="1"/>
</dbReference>
<dbReference type="HAMAP" id="MF_00121">
    <property type="entry name" value="GatB"/>
    <property type="match status" value="1"/>
</dbReference>
<dbReference type="InterPro" id="IPR017959">
    <property type="entry name" value="Asn/Gln-tRNA_amidoTrfase_suB/E"/>
</dbReference>
<dbReference type="InterPro" id="IPR006075">
    <property type="entry name" value="Asn/Gln-tRNA_Trfase_suB/E_cat"/>
</dbReference>
<dbReference type="InterPro" id="IPR018027">
    <property type="entry name" value="Asn/Gln_amidotransferase"/>
</dbReference>
<dbReference type="InterPro" id="IPR003789">
    <property type="entry name" value="Asn/Gln_tRNA_amidoTrase-B-like"/>
</dbReference>
<dbReference type="InterPro" id="IPR004413">
    <property type="entry name" value="GatB"/>
</dbReference>
<dbReference type="InterPro" id="IPR042114">
    <property type="entry name" value="GatB_C_1"/>
</dbReference>
<dbReference type="InterPro" id="IPR023168">
    <property type="entry name" value="GatB_Yqey_C_2"/>
</dbReference>
<dbReference type="InterPro" id="IPR017958">
    <property type="entry name" value="Gln-tRNA_amidoTrfase_suB_CS"/>
</dbReference>
<dbReference type="InterPro" id="IPR014746">
    <property type="entry name" value="Gln_synth/guanido_kin_cat_dom"/>
</dbReference>
<dbReference type="NCBIfam" id="TIGR00133">
    <property type="entry name" value="gatB"/>
    <property type="match status" value="1"/>
</dbReference>
<dbReference type="NCBIfam" id="NF004012">
    <property type="entry name" value="PRK05477.1-2"/>
    <property type="match status" value="1"/>
</dbReference>
<dbReference type="NCBIfam" id="NF004014">
    <property type="entry name" value="PRK05477.1-4"/>
    <property type="match status" value="1"/>
</dbReference>
<dbReference type="PANTHER" id="PTHR11659">
    <property type="entry name" value="GLUTAMYL-TRNA GLN AMIDOTRANSFERASE SUBUNIT B MITOCHONDRIAL AND PROKARYOTIC PET112-RELATED"/>
    <property type="match status" value="1"/>
</dbReference>
<dbReference type="PANTHER" id="PTHR11659:SF0">
    <property type="entry name" value="GLUTAMYL-TRNA(GLN) AMIDOTRANSFERASE SUBUNIT B, MITOCHONDRIAL"/>
    <property type="match status" value="1"/>
</dbReference>
<dbReference type="Pfam" id="PF02934">
    <property type="entry name" value="GatB_N"/>
    <property type="match status" value="1"/>
</dbReference>
<dbReference type="Pfam" id="PF02637">
    <property type="entry name" value="GatB_Yqey"/>
    <property type="match status" value="1"/>
</dbReference>
<dbReference type="SMART" id="SM00845">
    <property type="entry name" value="GatB_Yqey"/>
    <property type="match status" value="1"/>
</dbReference>
<dbReference type="SUPFAM" id="SSF89095">
    <property type="entry name" value="GatB/YqeY motif"/>
    <property type="match status" value="1"/>
</dbReference>
<dbReference type="SUPFAM" id="SSF55931">
    <property type="entry name" value="Glutamine synthetase/guanido kinase"/>
    <property type="match status" value="1"/>
</dbReference>
<dbReference type="PROSITE" id="PS01234">
    <property type="entry name" value="GATB"/>
    <property type="match status" value="1"/>
</dbReference>
<reference key="1">
    <citation type="submission" date="2007-07" db="EMBL/GenBank/DDBJ databases">
        <title>Genome sequence of Campylobacter curvus 525.92 isolated from human feces.</title>
        <authorList>
            <person name="Fouts D.E."/>
            <person name="Mongodin E.F."/>
            <person name="Puiu D."/>
            <person name="Sebastian Y."/>
            <person name="Miller W.G."/>
            <person name="Mandrell R.E."/>
            <person name="Lastovica A.J."/>
            <person name="Nelson K.E."/>
        </authorList>
    </citation>
    <scope>NUCLEOTIDE SEQUENCE [LARGE SCALE GENOMIC DNA]</scope>
    <source>
        <strain>525.92</strain>
    </source>
</reference>
<organism>
    <name type="scientific">Campylobacter curvus (strain 525.92)</name>
    <dbReference type="NCBI Taxonomy" id="360105"/>
    <lineage>
        <taxon>Bacteria</taxon>
        <taxon>Pseudomonadati</taxon>
        <taxon>Campylobacterota</taxon>
        <taxon>Epsilonproteobacteria</taxon>
        <taxon>Campylobacterales</taxon>
        <taxon>Campylobacteraceae</taxon>
        <taxon>Campylobacter</taxon>
    </lineage>
</organism>
<keyword id="KW-0067">ATP-binding</keyword>
<keyword id="KW-0436">Ligase</keyword>
<keyword id="KW-0547">Nucleotide-binding</keyword>
<keyword id="KW-0648">Protein biosynthesis</keyword>
<keyword id="KW-1185">Reference proteome</keyword>
<name>GATB_CAMC5</name>
<gene>
    <name evidence="1" type="primary">gatB</name>
    <name type="ordered locus">Ccur92_10590</name>
    <name type="ORF">CCV52592_0791</name>
</gene>
<comment type="function">
    <text evidence="1">Allows the formation of correctly charged Asn-tRNA(Asn) or Gln-tRNA(Gln) through the transamidation of misacylated Asp-tRNA(Asn) or Glu-tRNA(Gln) in organisms which lack either or both of asparaginyl-tRNA or glutaminyl-tRNA synthetases. The reaction takes place in the presence of glutamine and ATP through an activated phospho-Asp-tRNA(Asn) or phospho-Glu-tRNA(Gln).</text>
</comment>
<comment type="catalytic activity">
    <reaction evidence="1">
        <text>L-glutamyl-tRNA(Gln) + L-glutamine + ATP + H2O = L-glutaminyl-tRNA(Gln) + L-glutamate + ADP + phosphate + H(+)</text>
        <dbReference type="Rhea" id="RHEA:17521"/>
        <dbReference type="Rhea" id="RHEA-COMP:9681"/>
        <dbReference type="Rhea" id="RHEA-COMP:9684"/>
        <dbReference type="ChEBI" id="CHEBI:15377"/>
        <dbReference type="ChEBI" id="CHEBI:15378"/>
        <dbReference type="ChEBI" id="CHEBI:29985"/>
        <dbReference type="ChEBI" id="CHEBI:30616"/>
        <dbReference type="ChEBI" id="CHEBI:43474"/>
        <dbReference type="ChEBI" id="CHEBI:58359"/>
        <dbReference type="ChEBI" id="CHEBI:78520"/>
        <dbReference type="ChEBI" id="CHEBI:78521"/>
        <dbReference type="ChEBI" id="CHEBI:456216"/>
    </reaction>
</comment>
<comment type="catalytic activity">
    <reaction evidence="1">
        <text>L-aspartyl-tRNA(Asn) + L-glutamine + ATP + H2O = L-asparaginyl-tRNA(Asn) + L-glutamate + ADP + phosphate + 2 H(+)</text>
        <dbReference type="Rhea" id="RHEA:14513"/>
        <dbReference type="Rhea" id="RHEA-COMP:9674"/>
        <dbReference type="Rhea" id="RHEA-COMP:9677"/>
        <dbReference type="ChEBI" id="CHEBI:15377"/>
        <dbReference type="ChEBI" id="CHEBI:15378"/>
        <dbReference type="ChEBI" id="CHEBI:29985"/>
        <dbReference type="ChEBI" id="CHEBI:30616"/>
        <dbReference type="ChEBI" id="CHEBI:43474"/>
        <dbReference type="ChEBI" id="CHEBI:58359"/>
        <dbReference type="ChEBI" id="CHEBI:78515"/>
        <dbReference type="ChEBI" id="CHEBI:78516"/>
        <dbReference type="ChEBI" id="CHEBI:456216"/>
    </reaction>
</comment>
<comment type="subunit">
    <text evidence="1">Heterotrimer of A, B and C subunits.</text>
</comment>
<comment type="similarity">
    <text evidence="1">Belongs to the GatB/GatE family. GatB subfamily.</text>
</comment>
<sequence>MFEVVIGLEVHTQLNTKTKIFCSCSTSFGDEANTHVCPTCLALPGALPVLNKEAVKKAISFGTAINAKINKKSVFNRKNYFYPDLPKAYQISQFEIPIVEGGELIIDVNGEKKRIGITRAHLEEDAGKNIHESDHSLVDLNRAGTPLLEIVSEPDLRSSDEAVAYLKKLHSILRFLNISDANMQEGSFRCDANVSIRPKGDSKLYTRVEIKNLNSFKFIQKAIDYEVERQSAAWEDGKYDEEVYQETRLFDTTNLVTRSMRGKEDSAEYRYFPDPDLLPVLVDKAMYDEAIKIPELADEKVVRYQKEFGVKEDDALNLVSTIEMSRYFEDLVNSKISPKLCVTWLLVELNGRLKNGVTIETSPINSAKMIEFLKRIEDGTISGKAGKEVLDYLMEHPSEDVDAVIEKLGLKQVSDDSAIVAIIDQILAANADKVAEYKAGKDKMFGFFVGQVMKEGKGAFNPAKVNELLKSRLA</sequence>
<accession>A7GYS1</accession>
<feature type="chain" id="PRO_1000015951" description="Aspartyl/glutamyl-tRNA(Asn/Gln) amidotransferase subunit B">
    <location>
        <begin position="1"/>
        <end position="474"/>
    </location>
</feature>